<name>THIQ_RHIME</name>
<accession>Q92L31</accession>
<gene>
    <name evidence="1" type="primary">thiQ</name>
    <name type="ordered locus">R03254</name>
    <name type="ORF">SMc03871</name>
</gene>
<feature type="chain" id="PRO_0000274452" description="Thiamine import ATP-binding protein ThiQ">
    <location>
        <begin position="1"/>
        <end position="238"/>
    </location>
</feature>
<feature type="domain" description="ABC transporter" evidence="1">
    <location>
        <begin position="1"/>
        <end position="234"/>
    </location>
</feature>
<feature type="binding site" evidence="1">
    <location>
        <begin position="36"/>
        <end position="43"/>
    </location>
    <ligand>
        <name>ATP</name>
        <dbReference type="ChEBI" id="CHEBI:30616"/>
    </ligand>
</feature>
<organism>
    <name type="scientific">Rhizobium meliloti (strain 1021)</name>
    <name type="common">Ensifer meliloti</name>
    <name type="synonym">Sinorhizobium meliloti</name>
    <dbReference type="NCBI Taxonomy" id="266834"/>
    <lineage>
        <taxon>Bacteria</taxon>
        <taxon>Pseudomonadati</taxon>
        <taxon>Pseudomonadota</taxon>
        <taxon>Alphaproteobacteria</taxon>
        <taxon>Hyphomicrobiales</taxon>
        <taxon>Rhizobiaceae</taxon>
        <taxon>Sinorhizobium/Ensifer group</taxon>
        <taxon>Sinorhizobium</taxon>
    </lineage>
</organism>
<sequence>MSSTALAVKGVEISFETTTLAFDCAVPAKRIVAVAGASGSGKSTLFNIIAGFEQPGRGEVRILGEEMTGRAPAERPVSIIFQEHNLFAHLDVATNVGFGISPALRLDAANRTKVEDALARVGLAGFGKRLPPTLSGGERQRVALARAFVRHRPILLLDEPFAALDPGMRAEMRALISDLHEEEGNTILMITHHPDDVRALADSVLFLDRGRIVAHDEVDRFLGRRDIAAINRFLGNEG</sequence>
<dbReference type="EC" id="7.6.2.15" evidence="1"/>
<dbReference type="EMBL" id="AL591688">
    <property type="protein sequence ID" value="CAC47833.1"/>
    <property type="molecule type" value="Genomic_DNA"/>
</dbReference>
<dbReference type="RefSeq" id="NP_387360.1">
    <property type="nucleotide sequence ID" value="NC_003047.1"/>
</dbReference>
<dbReference type="RefSeq" id="WP_010970524.1">
    <property type="nucleotide sequence ID" value="NC_003047.1"/>
</dbReference>
<dbReference type="SMR" id="Q92L31"/>
<dbReference type="EnsemblBacteria" id="CAC47833">
    <property type="protein sequence ID" value="CAC47833"/>
    <property type="gene ID" value="SMc03871"/>
</dbReference>
<dbReference type="KEGG" id="sme:SMc03871"/>
<dbReference type="PATRIC" id="fig|266834.11.peg.4807"/>
<dbReference type="eggNOG" id="COG3840">
    <property type="taxonomic scope" value="Bacteria"/>
</dbReference>
<dbReference type="HOGENOM" id="CLU_000604_1_22_5"/>
<dbReference type="OrthoDB" id="9802264at2"/>
<dbReference type="Proteomes" id="UP000001976">
    <property type="component" value="Chromosome"/>
</dbReference>
<dbReference type="GO" id="GO:0005886">
    <property type="term" value="C:plasma membrane"/>
    <property type="evidence" value="ECO:0007669"/>
    <property type="project" value="UniProtKB-SubCell"/>
</dbReference>
<dbReference type="GO" id="GO:0048502">
    <property type="term" value="F:ABC-type thiamine transporter activity"/>
    <property type="evidence" value="ECO:0007669"/>
    <property type="project" value="UniProtKB-EC"/>
</dbReference>
<dbReference type="GO" id="GO:0005524">
    <property type="term" value="F:ATP binding"/>
    <property type="evidence" value="ECO:0007669"/>
    <property type="project" value="UniProtKB-KW"/>
</dbReference>
<dbReference type="GO" id="GO:0016887">
    <property type="term" value="F:ATP hydrolysis activity"/>
    <property type="evidence" value="ECO:0007669"/>
    <property type="project" value="InterPro"/>
</dbReference>
<dbReference type="Gene3D" id="3.40.50.300">
    <property type="entry name" value="P-loop containing nucleotide triphosphate hydrolases"/>
    <property type="match status" value="1"/>
</dbReference>
<dbReference type="InterPro" id="IPR003593">
    <property type="entry name" value="AAA+_ATPase"/>
</dbReference>
<dbReference type="InterPro" id="IPR050093">
    <property type="entry name" value="ABC_SmlMolc_Importer"/>
</dbReference>
<dbReference type="InterPro" id="IPR003439">
    <property type="entry name" value="ABC_transporter-like_ATP-bd"/>
</dbReference>
<dbReference type="InterPro" id="IPR017871">
    <property type="entry name" value="ABC_transporter-like_CS"/>
</dbReference>
<dbReference type="InterPro" id="IPR027417">
    <property type="entry name" value="P-loop_NTPase"/>
</dbReference>
<dbReference type="InterPro" id="IPR005968">
    <property type="entry name" value="Thiamine_ABC_ThiQ"/>
</dbReference>
<dbReference type="NCBIfam" id="TIGR01277">
    <property type="entry name" value="thiQ"/>
    <property type="match status" value="1"/>
</dbReference>
<dbReference type="PANTHER" id="PTHR42781">
    <property type="entry name" value="SPERMIDINE/PUTRESCINE IMPORT ATP-BINDING PROTEIN POTA"/>
    <property type="match status" value="1"/>
</dbReference>
<dbReference type="PANTHER" id="PTHR42781:SF1">
    <property type="entry name" value="THIAMINE IMPORT ATP-BINDING PROTEIN THIQ"/>
    <property type="match status" value="1"/>
</dbReference>
<dbReference type="Pfam" id="PF00005">
    <property type="entry name" value="ABC_tran"/>
    <property type="match status" value="1"/>
</dbReference>
<dbReference type="SMART" id="SM00382">
    <property type="entry name" value="AAA"/>
    <property type="match status" value="1"/>
</dbReference>
<dbReference type="SUPFAM" id="SSF52540">
    <property type="entry name" value="P-loop containing nucleoside triphosphate hydrolases"/>
    <property type="match status" value="1"/>
</dbReference>
<dbReference type="PROSITE" id="PS00211">
    <property type="entry name" value="ABC_TRANSPORTER_1"/>
    <property type="match status" value="1"/>
</dbReference>
<dbReference type="PROSITE" id="PS50893">
    <property type="entry name" value="ABC_TRANSPORTER_2"/>
    <property type="match status" value="1"/>
</dbReference>
<dbReference type="PROSITE" id="PS51288">
    <property type="entry name" value="THIQ"/>
    <property type="match status" value="1"/>
</dbReference>
<evidence type="ECO:0000255" key="1">
    <source>
        <dbReference type="HAMAP-Rule" id="MF_01723"/>
    </source>
</evidence>
<keyword id="KW-0067">ATP-binding</keyword>
<keyword id="KW-0997">Cell inner membrane</keyword>
<keyword id="KW-1003">Cell membrane</keyword>
<keyword id="KW-0472">Membrane</keyword>
<keyword id="KW-0547">Nucleotide-binding</keyword>
<keyword id="KW-1185">Reference proteome</keyword>
<keyword id="KW-1278">Translocase</keyword>
<keyword id="KW-0813">Transport</keyword>
<comment type="function">
    <text evidence="1">Part of the ABC transporter complex ThiBPQ involved in thiamine import. Responsible for energy coupling to the transport system.</text>
</comment>
<comment type="catalytic activity">
    <reaction evidence="1">
        <text>thiamine(out) + ATP + H2O = thiamine(in) + ADP + phosphate + H(+)</text>
        <dbReference type="Rhea" id="RHEA:29811"/>
        <dbReference type="ChEBI" id="CHEBI:15377"/>
        <dbReference type="ChEBI" id="CHEBI:15378"/>
        <dbReference type="ChEBI" id="CHEBI:18385"/>
        <dbReference type="ChEBI" id="CHEBI:30616"/>
        <dbReference type="ChEBI" id="CHEBI:43474"/>
        <dbReference type="ChEBI" id="CHEBI:456216"/>
        <dbReference type="EC" id="7.6.2.15"/>
    </reaction>
</comment>
<comment type="subunit">
    <text evidence="1">The complex is composed of two ATP-binding proteins (ThiQ), two transmembrane proteins (ThiP) and a solute-binding protein (ThiB).</text>
</comment>
<comment type="subcellular location">
    <subcellularLocation>
        <location evidence="1">Cell inner membrane</location>
        <topology evidence="1">Peripheral membrane protein</topology>
    </subcellularLocation>
</comment>
<comment type="similarity">
    <text evidence="1">Belongs to the ABC transporter superfamily. Thiamine importer (TC 3.A.1.19.1) family.</text>
</comment>
<reference key="1">
    <citation type="journal article" date="2001" name="Proc. Natl. Acad. Sci. U.S.A.">
        <title>Analysis of the chromosome sequence of the legume symbiont Sinorhizobium meliloti strain 1021.</title>
        <authorList>
            <person name="Capela D."/>
            <person name="Barloy-Hubler F."/>
            <person name="Gouzy J."/>
            <person name="Bothe G."/>
            <person name="Ampe F."/>
            <person name="Batut J."/>
            <person name="Boistard P."/>
            <person name="Becker A."/>
            <person name="Boutry M."/>
            <person name="Cadieu E."/>
            <person name="Dreano S."/>
            <person name="Gloux S."/>
            <person name="Godrie T."/>
            <person name="Goffeau A."/>
            <person name="Kahn D."/>
            <person name="Kiss E."/>
            <person name="Lelaure V."/>
            <person name="Masuy D."/>
            <person name="Pohl T."/>
            <person name="Portetelle D."/>
            <person name="Puehler A."/>
            <person name="Purnelle B."/>
            <person name="Ramsperger U."/>
            <person name="Renard C."/>
            <person name="Thebault P."/>
            <person name="Vandenbol M."/>
            <person name="Weidner S."/>
            <person name="Galibert F."/>
        </authorList>
    </citation>
    <scope>NUCLEOTIDE SEQUENCE [LARGE SCALE GENOMIC DNA]</scope>
    <source>
        <strain>1021</strain>
    </source>
</reference>
<reference key="2">
    <citation type="journal article" date="2001" name="Science">
        <title>The composite genome of the legume symbiont Sinorhizobium meliloti.</title>
        <authorList>
            <person name="Galibert F."/>
            <person name="Finan T.M."/>
            <person name="Long S.R."/>
            <person name="Puehler A."/>
            <person name="Abola P."/>
            <person name="Ampe F."/>
            <person name="Barloy-Hubler F."/>
            <person name="Barnett M.J."/>
            <person name="Becker A."/>
            <person name="Boistard P."/>
            <person name="Bothe G."/>
            <person name="Boutry M."/>
            <person name="Bowser L."/>
            <person name="Buhrmester J."/>
            <person name="Cadieu E."/>
            <person name="Capela D."/>
            <person name="Chain P."/>
            <person name="Cowie A."/>
            <person name="Davis R.W."/>
            <person name="Dreano S."/>
            <person name="Federspiel N.A."/>
            <person name="Fisher R.F."/>
            <person name="Gloux S."/>
            <person name="Godrie T."/>
            <person name="Goffeau A."/>
            <person name="Golding B."/>
            <person name="Gouzy J."/>
            <person name="Gurjal M."/>
            <person name="Hernandez-Lucas I."/>
            <person name="Hong A."/>
            <person name="Huizar L."/>
            <person name="Hyman R.W."/>
            <person name="Jones T."/>
            <person name="Kahn D."/>
            <person name="Kahn M.L."/>
            <person name="Kalman S."/>
            <person name="Keating D.H."/>
            <person name="Kiss E."/>
            <person name="Komp C."/>
            <person name="Lelaure V."/>
            <person name="Masuy D."/>
            <person name="Palm C."/>
            <person name="Peck M.C."/>
            <person name="Pohl T.M."/>
            <person name="Portetelle D."/>
            <person name="Purnelle B."/>
            <person name="Ramsperger U."/>
            <person name="Surzycki R."/>
            <person name="Thebault P."/>
            <person name="Vandenbol M."/>
            <person name="Vorhoelter F.J."/>
            <person name="Weidner S."/>
            <person name="Wells D.H."/>
            <person name="Wong K."/>
            <person name="Yeh K.-C."/>
            <person name="Batut J."/>
        </authorList>
    </citation>
    <scope>NUCLEOTIDE SEQUENCE [LARGE SCALE GENOMIC DNA]</scope>
    <source>
        <strain>1021</strain>
    </source>
</reference>
<proteinExistence type="inferred from homology"/>
<protein>
    <recommendedName>
        <fullName evidence="1">Thiamine import ATP-binding protein ThiQ</fullName>
        <ecNumber evidence="1">7.6.2.15</ecNumber>
    </recommendedName>
</protein>